<comment type="function">
    <text evidence="1">Single strand-specific metallo-endoribonuclease involved in late-stage 70S ribosome quality control and in maturation of the 3' terminus of the 16S rRNA.</text>
</comment>
<comment type="cofactor">
    <cofactor evidence="1">
        <name>Zn(2+)</name>
        <dbReference type="ChEBI" id="CHEBI:29105"/>
    </cofactor>
    <text evidence="1">Binds 1 zinc ion.</text>
</comment>
<comment type="subcellular location">
    <subcellularLocation>
        <location evidence="1">Cytoplasm</location>
    </subcellularLocation>
</comment>
<comment type="similarity">
    <text evidence="1">Belongs to the endoribonuclease YbeY family.</text>
</comment>
<protein>
    <recommendedName>
        <fullName evidence="1">Endoribonuclease YbeY</fullName>
        <ecNumber evidence="1">3.1.-.-</ecNumber>
    </recommendedName>
</protein>
<dbReference type="EC" id="3.1.-.-" evidence="1"/>
<dbReference type="EMBL" id="CU928145">
    <property type="protein sequence ID" value="CAU96526.1"/>
    <property type="molecule type" value="Genomic_DNA"/>
</dbReference>
<dbReference type="RefSeq" id="WP_000084469.1">
    <property type="nucleotide sequence ID" value="NC_011748.1"/>
</dbReference>
<dbReference type="SMR" id="B7L9K6"/>
<dbReference type="GeneID" id="93776823"/>
<dbReference type="KEGG" id="eck:EC55989_0654"/>
<dbReference type="HOGENOM" id="CLU_106710_0_1_6"/>
<dbReference type="Proteomes" id="UP000000746">
    <property type="component" value="Chromosome"/>
</dbReference>
<dbReference type="GO" id="GO:0005737">
    <property type="term" value="C:cytoplasm"/>
    <property type="evidence" value="ECO:0007669"/>
    <property type="project" value="UniProtKB-SubCell"/>
</dbReference>
<dbReference type="GO" id="GO:0004222">
    <property type="term" value="F:metalloendopeptidase activity"/>
    <property type="evidence" value="ECO:0007669"/>
    <property type="project" value="InterPro"/>
</dbReference>
<dbReference type="GO" id="GO:0004521">
    <property type="term" value="F:RNA endonuclease activity"/>
    <property type="evidence" value="ECO:0007669"/>
    <property type="project" value="UniProtKB-UniRule"/>
</dbReference>
<dbReference type="GO" id="GO:0008270">
    <property type="term" value="F:zinc ion binding"/>
    <property type="evidence" value="ECO:0007669"/>
    <property type="project" value="UniProtKB-UniRule"/>
</dbReference>
<dbReference type="GO" id="GO:0006364">
    <property type="term" value="P:rRNA processing"/>
    <property type="evidence" value="ECO:0007669"/>
    <property type="project" value="UniProtKB-UniRule"/>
</dbReference>
<dbReference type="FunFam" id="3.40.390.30:FF:000001">
    <property type="entry name" value="Endoribonuclease YbeY"/>
    <property type="match status" value="1"/>
</dbReference>
<dbReference type="Gene3D" id="3.40.390.30">
    <property type="entry name" value="Metalloproteases ('zincins'), catalytic domain"/>
    <property type="match status" value="1"/>
</dbReference>
<dbReference type="HAMAP" id="MF_00009">
    <property type="entry name" value="Endoribonucl_YbeY"/>
    <property type="match status" value="1"/>
</dbReference>
<dbReference type="InterPro" id="IPR023091">
    <property type="entry name" value="MetalPrtase_cat_dom_sf_prd"/>
</dbReference>
<dbReference type="InterPro" id="IPR002036">
    <property type="entry name" value="YbeY"/>
</dbReference>
<dbReference type="InterPro" id="IPR020549">
    <property type="entry name" value="YbeY_CS"/>
</dbReference>
<dbReference type="NCBIfam" id="TIGR00043">
    <property type="entry name" value="rRNA maturation RNase YbeY"/>
    <property type="match status" value="1"/>
</dbReference>
<dbReference type="PANTHER" id="PTHR46986">
    <property type="entry name" value="ENDORIBONUCLEASE YBEY, CHLOROPLASTIC"/>
    <property type="match status" value="1"/>
</dbReference>
<dbReference type="PANTHER" id="PTHR46986:SF1">
    <property type="entry name" value="ENDORIBONUCLEASE YBEY, CHLOROPLASTIC"/>
    <property type="match status" value="1"/>
</dbReference>
<dbReference type="Pfam" id="PF02130">
    <property type="entry name" value="YbeY"/>
    <property type="match status" value="1"/>
</dbReference>
<dbReference type="SUPFAM" id="SSF55486">
    <property type="entry name" value="Metalloproteases ('zincins'), catalytic domain"/>
    <property type="match status" value="1"/>
</dbReference>
<dbReference type="PROSITE" id="PS01306">
    <property type="entry name" value="UPF0054"/>
    <property type="match status" value="1"/>
</dbReference>
<proteinExistence type="inferred from homology"/>
<keyword id="KW-0963">Cytoplasm</keyword>
<keyword id="KW-0255">Endonuclease</keyword>
<keyword id="KW-0378">Hydrolase</keyword>
<keyword id="KW-0479">Metal-binding</keyword>
<keyword id="KW-0540">Nuclease</keyword>
<keyword id="KW-1185">Reference proteome</keyword>
<keyword id="KW-0690">Ribosome biogenesis</keyword>
<keyword id="KW-0698">rRNA processing</keyword>
<keyword id="KW-0862">Zinc</keyword>
<name>YBEY_ECO55</name>
<evidence type="ECO:0000255" key="1">
    <source>
        <dbReference type="HAMAP-Rule" id="MF_00009"/>
    </source>
</evidence>
<accession>B7L9K6</accession>
<sequence length="155" mass="17526">MSQVILDLQLACEDNSGLPEESQFQTWLNAVIPQFQEESEVTIRVVDTAESHSLNLTYRGKDKPTNVLSFPFEVPPGMEMSLLGDLVICRQVVEKEAQEQGKPLEAHWAHMVVHGSLHLLGYDHIEDDEAEEMEALETEIMLALGYEDPYIAEKE</sequence>
<reference key="1">
    <citation type="journal article" date="2009" name="PLoS Genet.">
        <title>Organised genome dynamics in the Escherichia coli species results in highly diverse adaptive paths.</title>
        <authorList>
            <person name="Touchon M."/>
            <person name="Hoede C."/>
            <person name="Tenaillon O."/>
            <person name="Barbe V."/>
            <person name="Baeriswyl S."/>
            <person name="Bidet P."/>
            <person name="Bingen E."/>
            <person name="Bonacorsi S."/>
            <person name="Bouchier C."/>
            <person name="Bouvet O."/>
            <person name="Calteau A."/>
            <person name="Chiapello H."/>
            <person name="Clermont O."/>
            <person name="Cruveiller S."/>
            <person name="Danchin A."/>
            <person name="Diard M."/>
            <person name="Dossat C."/>
            <person name="Karoui M.E."/>
            <person name="Frapy E."/>
            <person name="Garry L."/>
            <person name="Ghigo J.M."/>
            <person name="Gilles A.M."/>
            <person name="Johnson J."/>
            <person name="Le Bouguenec C."/>
            <person name="Lescat M."/>
            <person name="Mangenot S."/>
            <person name="Martinez-Jehanne V."/>
            <person name="Matic I."/>
            <person name="Nassif X."/>
            <person name="Oztas S."/>
            <person name="Petit M.A."/>
            <person name="Pichon C."/>
            <person name="Rouy Z."/>
            <person name="Ruf C.S."/>
            <person name="Schneider D."/>
            <person name="Tourret J."/>
            <person name="Vacherie B."/>
            <person name="Vallenet D."/>
            <person name="Medigue C."/>
            <person name="Rocha E.P.C."/>
            <person name="Denamur E."/>
        </authorList>
    </citation>
    <scope>NUCLEOTIDE SEQUENCE [LARGE SCALE GENOMIC DNA]</scope>
    <source>
        <strain>55989 / EAEC</strain>
    </source>
</reference>
<gene>
    <name evidence="1" type="primary">ybeY</name>
    <name type="ordered locus">EC55989_0654</name>
</gene>
<feature type="chain" id="PRO_1000199970" description="Endoribonuclease YbeY">
    <location>
        <begin position="1"/>
        <end position="155"/>
    </location>
</feature>
<feature type="binding site" evidence="1">
    <location>
        <position position="114"/>
    </location>
    <ligand>
        <name>Zn(2+)</name>
        <dbReference type="ChEBI" id="CHEBI:29105"/>
        <note>catalytic</note>
    </ligand>
</feature>
<feature type="binding site" evidence="1">
    <location>
        <position position="118"/>
    </location>
    <ligand>
        <name>Zn(2+)</name>
        <dbReference type="ChEBI" id="CHEBI:29105"/>
        <note>catalytic</note>
    </ligand>
</feature>
<feature type="binding site" evidence="1">
    <location>
        <position position="124"/>
    </location>
    <ligand>
        <name>Zn(2+)</name>
        <dbReference type="ChEBI" id="CHEBI:29105"/>
        <note>catalytic</note>
    </ligand>
</feature>
<organism>
    <name type="scientific">Escherichia coli (strain 55989 / EAEC)</name>
    <dbReference type="NCBI Taxonomy" id="585055"/>
    <lineage>
        <taxon>Bacteria</taxon>
        <taxon>Pseudomonadati</taxon>
        <taxon>Pseudomonadota</taxon>
        <taxon>Gammaproteobacteria</taxon>
        <taxon>Enterobacterales</taxon>
        <taxon>Enterobacteriaceae</taxon>
        <taxon>Escherichia</taxon>
    </lineage>
</organism>